<evidence type="ECO:0000255" key="1">
    <source>
        <dbReference type="HAMAP-Rule" id="MF_00661"/>
    </source>
</evidence>
<accession>Q887N8</accession>
<gene>
    <name evidence="1" type="primary">rhlB</name>
    <name type="ordered locus">PSPTO_1253</name>
</gene>
<protein>
    <recommendedName>
        <fullName evidence="1">ATP-dependent RNA helicase RhlB</fullName>
        <ecNumber evidence="1">3.6.4.13</ecNumber>
    </recommendedName>
</protein>
<dbReference type="EC" id="3.6.4.13" evidence="1"/>
<dbReference type="EMBL" id="AE016853">
    <property type="protein sequence ID" value="AAO54778.1"/>
    <property type="molecule type" value="Genomic_DNA"/>
</dbReference>
<dbReference type="RefSeq" id="NP_791083.3">
    <property type="nucleotide sequence ID" value="NC_004578.1"/>
</dbReference>
<dbReference type="SMR" id="Q887N8"/>
<dbReference type="STRING" id="223283.PSPTO_1253"/>
<dbReference type="KEGG" id="pst:PSPTO_1253"/>
<dbReference type="PATRIC" id="fig|223283.9.peg.1274"/>
<dbReference type="eggNOG" id="COG0513">
    <property type="taxonomic scope" value="Bacteria"/>
</dbReference>
<dbReference type="HOGENOM" id="CLU_003041_1_3_6"/>
<dbReference type="OrthoDB" id="9805696at2"/>
<dbReference type="PhylomeDB" id="Q887N8"/>
<dbReference type="Proteomes" id="UP000002515">
    <property type="component" value="Chromosome"/>
</dbReference>
<dbReference type="GO" id="GO:0005829">
    <property type="term" value="C:cytosol"/>
    <property type="evidence" value="ECO:0007669"/>
    <property type="project" value="TreeGrafter"/>
</dbReference>
<dbReference type="GO" id="GO:0005524">
    <property type="term" value="F:ATP binding"/>
    <property type="evidence" value="ECO:0007669"/>
    <property type="project" value="UniProtKB-UniRule"/>
</dbReference>
<dbReference type="GO" id="GO:0016887">
    <property type="term" value="F:ATP hydrolysis activity"/>
    <property type="evidence" value="ECO:0007669"/>
    <property type="project" value="RHEA"/>
</dbReference>
<dbReference type="GO" id="GO:0003723">
    <property type="term" value="F:RNA binding"/>
    <property type="evidence" value="ECO:0007669"/>
    <property type="project" value="UniProtKB-UniRule"/>
</dbReference>
<dbReference type="GO" id="GO:0003724">
    <property type="term" value="F:RNA helicase activity"/>
    <property type="evidence" value="ECO:0007669"/>
    <property type="project" value="UniProtKB-UniRule"/>
</dbReference>
<dbReference type="GO" id="GO:0006401">
    <property type="term" value="P:RNA catabolic process"/>
    <property type="evidence" value="ECO:0007669"/>
    <property type="project" value="UniProtKB-UniRule"/>
</dbReference>
<dbReference type="CDD" id="cd00268">
    <property type="entry name" value="DEADc"/>
    <property type="match status" value="1"/>
</dbReference>
<dbReference type="CDD" id="cd18787">
    <property type="entry name" value="SF2_C_DEAD"/>
    <property type="match status" value="1"/>
</dbReference>
<dbReference type="Gene3D" id="3.40.50.300">
    <property type="entry name" value="P-loop containing nucleotide triphosphate hydrolases"/>
    <property type="match status" value="2"/>
</dbReference>
<dbReference type="HAMAP" id="MF_00661">
    <property type="entry name" value="DEAD_helicase_RhlB"/>
    <property type="match status" value="1"/>
</dbReference>
<dbReference type="InterPro" id="IPR011545">
    <property type="entry name" value="DEAD/DEAH_box_helicase_dom"/>
</dbReference>
<dbReference type="InterPro" id="IPR050079">
    <property type="entry name" value="DEAD_box_RNA_helicase"/>
</dbReference>
<dbReference type="InterPro" id="IPR014001">
    <property type="entry name" value="Helicase_ATP-bd"/>
</dbReference>
<dbReference type="InterPro" id="IPR001650">
    <property type="entry name" value="Helicase_C-like"/>
</dbReference>
<dbReference type="InterPro" id="IPR027417">
    <property type="entry name" value="P-loop_NTPase"/>
</dbReference>
<dbReference type="InterPro" id="IPR000629">
    <property type="entry name" value="RNA-helicase_DEAD-box_CS"/>
</dbReference>
<dbReference type="InterPro" id="IPR023554">
    <property type="entry name" value="RNA_helicase_ATP-dep_RhlB"/>
</dbReference>
<dbReference type="InterPro" id="IPR014014">
    <property type="entry name" value="RNA_helicase_DEAD_Q_motif"/>
</dbReference>
<dbReference type="NCBIfam" id="NF002340">
    <property type="entry name" value="PRK01297.1"/>
    <property type="match status" value="1"/>
</dbReference>
<dbReference type="PANTHER" id="PTHR47959:SF10">
    <property type="entry name" value="ATP-DEPENDENT RNA HELICASE RHLB"/>
    <property type="match status" value="1"/>
</dbReference>
<dbReference type="PANTHER" id="PTHR47959">
    <property type="entry name" value="ATP-DEPENDENT RNA HELICASE RHLE-RELATED"/>
    <property type="match status" value="1"/>
</dbReference>
<dbReference type="Pfam" id="PF00270">
    <property type="entry name" value="DEAD"/>
    <property type="match status" value="1"/>
</dbReference>
<dbReference type="Pfam" id="PF00271">
    <property type="entry name" value="Helicase_C"/>
    <property type="match status" value="1"/>
</dbReference>
<dbReference type="SMART" id="SM00487">
    <property type="entry name" value="DEXDc"/>
    <property type="match status" value="1"/>
</dbReference>
<dbReference type="SMART" id="SM00490">
    <property type="entry name" value="HELICc"/>
    <property type="match status" value="1"/>
</dbReference>
<dbReference type="SUPFAM" id="SSF52540">
    <property type="entry name" value="P-loop containing nucleoside triphosphate hydrolases"/>
    <property type="match status" value="1"/>
</dbReference>
<dbReference type="PROSITE" id="PS00039">
    <property type="entry name" value="DEAD_ATP_HELICASE"/>
    <property type="match status" value="1"/>
</dbReference>
<dbReference type="PROSITE" id="PS51192">
    <property type="entry name" value="HELICASE_ATP_BIND_1"/>
    <property type="match status" value="1"/>
</dbReference>
<dbReference type="PROSITE" id="PS51194">
    <property type="entry name" value="HELICASE_CTER"/>
    <property type="match status" value="1"/>
</dbReference>
<dbReference type="PROSITE" id="PS51195">
    <property type="entry name" value="Q_MOTIF"/>
    <property type="match status" value="1"/>
</dbReference>
<sequence length="397" mass="44307">MEPQEGKTRFHDFNLAPELMHAIQDLGFPYCTPIQAGVLGFTLKGKDAIGRAQTGTGKTAAFLISIIEQLTQTPPPAERYMGEPRALIIAPTRELVVQIAKDAADLTKYTNLNVMTFVGGMDFDKQLKQLEARHCDILVATPGRLLDFNQRGEVHLDMVEVMVLDEADRMLDMGFIPQVRQIIRQTPHKGERQTLLFSATFTEDVMNLAKQWTTDPSIVEIESLNVASDNVEQHIYAVAGADKYKLLYNLVTDNGWERVMVFANRKDEVRRIEERLVRDGVNAAQLSGDVPQHKRIKTLEGFREGKIRVLVATDVAGRGIHIDGISHVINFTLPEVPDDYVHRIGRTGRAGADGVSISFAGEDDSYQLPAIEEKLGRKISCETPPTHLLRAVVRQTN</sequence>
<feature type="chain" id="PRO_0000200781" description="ATP-dependent RNA helicase RhlB">
    <location>
        <begin position="1"/>
        <end position="397"/>
    </location>
</feature>
<feature type="domain" description="Helicase ATP-binding" evidence="1">
    <location>
        <begin position="39"/>
        <end position="219"/>
    </location>
</feature>
<feature type="domain" description="Helicase C-terminal" evidence="1">
    <location>
        <begin position="242"/>
        <end position="392"/>
    </location>
</feature>
<feature type="short sequence motif" description="Q motif">
    <location>
        <begin position="8"/>
        <end position="36"/>
    </location>
</feature>
<feature type="short sequence motif" description="DEAD box">
    <location>
        <begin position="165"/>
        <end position="168"/>
    </location>
</feature>
<feature type="binding site" evidence="1">
    <location>
        <begin position="52"/>
        <end position="59"/>
    </location>
    <ligand>
        <name>ATP</name>
        <dbReference type="ChEBI" id="CHEBI:30616"/>
    </ligand>
</feature>
<name>RHLB_PSESM</name>
<proteinExistence type="inferred from homology"/>
<comment type="function">
    <text evidence="1">DEAD-box RNA helicase involved in RNA degradation. Has RNA-dependent ATPase activity and unwinds double-stranded RNA.</text>
</comment>
<comment type="catalytic activity">
    <reaction evidence="1">
        <text>ATP + H2O = ADP + phosphate + H(+)</text>
        <dbReference type="Rhea" id="RHEA:13065"/>
        <dbReference type="ChEBI" id="CHEBI:15377"/>
        <dbReference type="ChEBI" id="CHEBI:15378"/>
        <dbReference type="ChEBI" id="CHEBI:30616"/>
        <dbReference type="ChEBI" id="CHEBI:43474"/>
        <dbReference type="ChEBI" id="CHEBI:456216"/>
        <dbReference type="EC" id="3.6.4.13"/>
    </reaction>
</comment>
<comment type="subunit">
    <text evidence="1">Component of the RNA degradosome, which is a multiprotein complex involved in RNA processing and mRNA degradation.</text>
</comment>
<comment type="subcellular location">
    <subcellularLocation>
        <location evidence="1">Cytoplasm</location>
    </subcellularLocation>
</comment>
<comment type="similarity">
    <text evidence="1">Belongs to the DEAD box helicase family. RhlB subfamily.</text>
</comment>
<reference key="1">
    <citation type="journal article" date="2003" name="Proc. Natl. Acad. Sci. U.S.A.">
        <title>The complete genome sequence of the Arabidopsis and tomato pathogen Pseudomonas syringae pv. tomato DC3000.</title>
        <authorList>
            <person name="Buell C.R."/>
            <person name="Joardar V."/>
            <person name="Lindeberg M."/>
            <person name="Selengut J."/>
            <person name="Paulsen I.T."/>
            <person name="Gwinn M.L."/>
            <person name="Dodson R.J."/>
            <person name="DeBoy R.T."/>
            <person name="Durkin A.S."/>
            <person name="Kolonay J.F."/>
            <person name="Madupu R."/>
            <person name="Daugherty S.C."/>
            <person name="Brinkac L.M."/>
            <person name="Beanan M.J."/>
            <person name="Haft D.H."/>
            <person name="Nelson W.C."/>
            <person name="Davidsen T.M."/>
            <person name="Zafar N."/>
            <person name="Zhou L."/>
            <person name="Liu J."/>
            <person name="Yuan Q."/>
            <person name="Khouri H.M."/>
            <person name="Fedorova N.B."/>
            <person name="Tran B."/>
            <person name="Russell D."/>
            <person name="Berry K.J."/>
            <person name="Utterback T.R."/>
            <person name="Van Aken S.E."/>
            <person name="Feldblyum T.V."/>
            <person name="D'Ascenzo M."/>
            <person name="Deng W.-L."/>
            <person name="Ramos A.R."/>
            <person name="Alfano J.R."/>
            <person name="Cartinhour S."/>
            <person name="Chatterjee A.K."/>
            <person name="Delaney T.P."/>
            <person name="Lazarowitz S.G."/>
            <person name="Martin G.B."/>
            <person name="Schneider D.J."/>
            <person name="Tang X."/>
            <person name="Bender C.L."/>
            <person name="White O."/>
            <person name="Fraser C.M."/>
            <person name="Collmer A."/>
        </authorList>
    </citation>
    <scope>NUCLEOTIDE SEQUENCE [LARGE SCALE GENOMIC DNA]</scope>
    <source>
        <strain>ATCC BAA-871 / DC3000</strain>
    </source>
</reference>
<keyword id="KW-0067">ATP-binding</keyword>
<keyword id="KW-0963">Cytoplasm</keyword>
<keyword id="KW-0347">Helicase</keyword>
<keyword id="KW-0378">Hydrolase</keyword>
<keyword id="KW-0547">Nucleotide-binding</keyword>
<keyword id="KW-1185">Reference proteome</keyword>
<keyword id="KW-0694">RNA-binding</keyword>
<organism>
    <name type="scientific">Pseudomonas syringae pv. tomato (strain ATCC BAA-871 / DC3000)</name>
    <dbReference type="NCBI Taxonomy" id="223283"/>
    <lineage>
        <taxon>Bacteria</taxon>
        <taxon>Pseudomonadati</taxon>
        <taxon>Pseudomonadota</taxon>
        <taxon>Gammaproteobacteria</taxon>
        <taxon>Pseudomonadales</taxon>
        <taxon>Pseudomonadaceae</taxon>
        <taxon>Pseudomonas</taxon>
    </lineage>
</organism>